<reference key="1">
    <citation type="journal article" date="2003" name="J. Bacteriol.">
        <title>Complete genome sequence of the oral pathogenic bacterium Porphyromonas gingivalis strain W83.</title>
        <authorList>
            <person name="Nelson K.E."/>
            <person name="Fleischmann R.D."/>
            <person name="DeBoy R.T."/>
            <person name="Paulsen I.T."/>
            <person name="Fouts D.E."/>
            <person name="Eisen J.A."/>
            <person name="Daugherty S.C."/>
            <person name="Dodson R.J."/>
            <person name="Durkin A.S."/>
            <person name="Gwinn M.L."/>
            <person name="Haft D.H."/>
            <person name="Kolonay J.F."/>
            <person name="Nelson W.C."/>
            <person name="Mason T.M."/>
            <person name="Tallon L."/>
            <person name="Gray J."/>
            <person name="Granger D."/>
            <person name="Tettelin H."/>
            <person name="Dong H."/>
            <person name="Galvin J.L."/>
            <person name="Duncan M.J."/>
            <person name="Dewhirst F.E."/>
            <person name="Fraser C.M."/>
        </authorList>
    </citation>
    <scope>NUCLEOTIDE SEQUENCE [LARGE SCALE GENOMIC DNA]</scope>
    <source>
        <strain>ATCC BAA-308 / W83</strain>
    </source>
</reference>
<reference key="2">
    <citation type="journal article" date="1993" name="Infect. Immun.">
        <title>Characterization of recombinant and native forms of a cell surface antigen of Porphyromonas (Bacteroides) gingivalis.</title>
        <authorList>
            <person name="Joe A."/>
            <person name="Yamamoto A."/>
            <person name="McBride B.C."/>
        </authorList>
    </citation>
    <scope>PROTEIN SEQUENCE OF 1-29</scope>
</reference>
<protein>
    <recommendedName>
        <fullName>NAD-specific glutamate dehydrogenase</fullName>
        <shortName>NAD-GDH</shortName>
        <ecNumber>1.4.1.2</ecNumber>
    </recommendedName>
    <alternativeName>
        <fullName>Surface-associated protein PGAG1</fullName>
    </alternativeName>
</protein>
<keyword id="KW-0903">Direct protein sequencing</keyword>
<keyword id="KW-0520">NAD</keyword>
<keyword id="KW-0560">Oxidoreductase</keyword>
<keyword id="KW-1185">Reference proteome</keyword>
<organism>
    <name type="scientific">Porphyromonas gingivalis (strain ATCC BAA-308 / W83)</name>
    <dbReference type="NCBI Taxonomy" id="242619"/>
    <lineage>
        <taxon>Bacteria</taxon>
        <taxon>Pseudomonadati</taxon>
        <taxon>Bacteroidota</taxon>
        <taxon>Bacteroidia</taxon>
        <taxon>Bacteroidales</taxon>
        <taxon>Porphyromonadaceae</taxon>
        <taxon>Porphyromonas</taxon>
    </lineage>
</organism>
<comment type="function">
    <text>Probably involved in degradation rather than biosynthesis of glutamate.</text>
</comment>
<comment type="catalytic activity">
    <reaction>
        <text>L-glutamate + NAD(+) + H2O = 2-oxoglutarate + NH4(+) + NADH + H(+)</text>
        <dbReference type="Rhea" id="RHEA:15133"/>
        <dbReference type="ChEBI" id="CHEBI:15377"/>
        <dbReference type="ChEBI" id="CHEBI:15378"/>
        <dbReference type="ChEBI" id="CHEBI:16810"/>
        <dbReference type="ChEBI" id="CHEBI:28938"/>
        <dbReference type="ChEBI" id="CHEBI:29985"/>
        <dbReference type="ChEBI" id="CHEBI:57540"/>
        <dbReference type="ChEBI" id="CHEBI:57945"/>
        <dbReference type="EC" id="1.4.1.2"/>
    </reaction>
</comment>
<comment type="subunit">
    <text evidence="2">Homohexamer.</text>
</comment>
<comment type="subcellular location">
    <subcellularLocation>
        <location>Cell surface</location>
    </subcellularLocation>
</comment>
<comment type="similarity">
    <text evidence="2">Belongs to the Glu/Leu/Phe/Val dehydrogenases family.</text>
</comment>
<evidence type="ECO:0000255" key="1">
    <source>
        <dbReference type="PROSITE-ProRule" id="PRU10011"/>
    </source>
</evidence>
<evidence type="ECO:0000305" key="2"/>
<proteinExistence type="evidence at protein level"/>
<gene>
    <name type="primary">gdh</name>
    <name type="ordered locus">PG_1232</name>
</gene>
<sequence length="445" mass="49199">MKTQEIMTMLEAKHPGESEFLQAVKEVLLSVEEVYNQHPEFEKNGIIERIVEPDRVFTFRVPWVDDQGKVQVNIGYRVQFNNAIGPYKGGIRFHPSVNLSILKFLGFEQMFKNALTTLPMGGGKGGADFSPKGKSEAEIMRFCQSFMTELWRNIGPDTDIPAGDIGVGGREVGYMFGMYKKLAREHTGTLTGKGFEFGGSRLRPESTGFGAVYFVQNMCKQNGVDYKGKTLAISGFGNVAWGVAQKATELGIKVVTISGPDGYVYDPDGINTPEKFRCMLDLRDSGNDVVSDYVKRFPNAQFFPGKKPWEQKVDFAMPCATQNEMNLEDAKTLHKNGVTLVAETSNMGCTAEASEYYVANKMLFAPGKAVNAGGVSCSGLEMTQNAMHLVWTNEEVDKWLHQIMQDIHEQCVTYGKDGNYIDYVKGANIAGFMKVAKAMVAQGVC</sequence>
<accession>P0C934</accession>
<accession>Q03578</accession>
<feature type="chain" id="PRO_0000182740" description="NAD-specific glutamate dehydrogenase">
    <location>
        <begin position="1"/>
        <end position="445"/>
    </location>
</feature>
<feature type="active site" evidence="1">
    <location>
        <position position="124"/>
    </location>
</feature>
<dbReference type="EC" id="1.4.1.2"/>
<dbReference type="EMBL" id="AE015924">
    <property type="protein sequence ID" value="AAQ66318.1"/>
    <property type="molecule type" value="Genomic_DNA"/>
</dbReference>
<dbReference type="SMR" id="P0C934"/>
<dbReference type="STRING" id="242619.PG_1232"/>
<dbReference type="EnsemblBacteria" id="AAQ66318">
    <property type="protein sequence ID" value="AAQ66318"/>
    <property type="gene ID" value="PG_1232"/>
</dbReference>
<dbReference type="KEGG" id="pgi:PG_1232"/>
<dbReference type="eggNOG" id="COG0334">
    <property type="taxonomic scope" value="Bacteria"/>
</dbReference>
<dbReference type="HOGENOM" id="CLU_025763_2_1_10"/>
<dbReference type="Proteomes" id="UP000000588">
    <property type="component" value="Chromosome"/>
</dbReference>
<dbReference type="GO" id="GO:0009986">
    <property type="term" value="C:cell surface"/>
    <property type="evidence" value="ECO:0007669"/>
    <property type="project" value="UniProtKB-SubCell"/>
</dbReference>
<dbReference type="GO" id="GO:0005829">
    <property type="term" value="C:cytosol"/>
    <property type="evidence" value="ECO:0007669"/>
    <property type="project" value="TreeGrafter"/>
</dbReference>
<dbReference type="GO" id="GO:0004352">
    <property type="term" value="F:glutamate dehydrogenase (NAD+) activity"/>
    <property type="evidence" value="ECO:0007669"/>
    <property type="project" value="UniProtKB-EC"/>
</dbReference>
<dbReference type="GO" id="GO:0004354">
    <property type="term" value="F:glutamate dehydrogenase (NADP+) activity"/>
    <property type="evidence" value="ECO:0007669"/>
    <property type="project" value="TreeGrafter"/>
</dbReference>
<dbReference type="GO" id="GO:0006537">
    <property type="term" value="P:glutamate biosynthetic process"/>
    <property type="evidence" value="ECO:0007669"/>
    <property type="project" value="TreeGrafter"/>
</dbReference>
<dbReference type="CDD" id="cd05313">
    <property type="entry name" value="NAD_bind_2_Glu_DH"/>
    <property type="match status" value="1"/>
</dbReference>
<dbReference type="FunFam" id="1.10.285.10:FF:000001">
    <property type="entry name" value="Glutamate dehydrogenase"/>
    <property type="match status" value="1"/>
</dbReference>
<dbReference type="FunFam" id="3.40.50.10860:FF:000002">
    <property type="entry name" value="Glutamate dehydrogenase"/>
    <property type="match status" value="1"/>
</dbReference>
<dbReference type="FunFam" id="3.40.50.720:FF:000030">
    <property type="entry name" value="Glutamate dehydrogenase"/>
    <property type="match status" value="1"/>
</dbReference>
<dbReference type="Gene3D" id="1.10.285.10">
    <property type="entry name" value="Glutamate Dehydrogenase, chain A, domain 3"/>
    <property type="match status" value="2"/>
</dbReference>
<dbReference type="Gene3D" id="3.40.50.10860">
    <property type="entry name" value="Leucine Dehydrogenase, chain A, domain 1"/>
    <property type="match status" value="1"/>
</dbReference>
<dbReference type="Gene3D" id="3.40.50.720">
    <property type="entry name" value="NAD(P)-binding Rossmann-like Domain"/>
    <property type="match status" value="1"/>
</dbReference>
<dbReference type="InterPro" id="IPR046346">
    <property type="entry name" value="Aminoacid_DH-like_N_sf"/>
</dbReference>
<dbReference type="InterPro" id="IPR006095">
    <property type="entry name" value="Glu/Leu/Phe/Val/Trp_DH"/>
</dbReference>
<dbReference type="InterPro" id="IPR006096">
    <property type="entry name" value="Glu/Leu/Phe/Val/Trp_DH_C"/>
</dbReference>
<dbReference type="InterPro" id="IPR006097">
    <property type="entry name" value="Glu/Leu/Phe/Val/Trp_DH_dimer"/>
</dbReference>
<dbReference type="InterPro" id="IPR033524">
    <property type="entry name" value="Glu/Leu/Phe/Val_DH_AS"/>
</dbReference>
<dbReference type="InterPro" id="IPR014362">
    <property type="entry name" value="Glu_DH"/>
</dbReference>
<dbReference type="InterPro" id="IPR050724">
    <property type="entry name" value="Glu_Leu_Phe_Val_DH"/>
</dbReference>
<dbReference type="InterPro" id="IPR036291">
    <property type="entry name" value="NAD(P)-bd_dom_sf"/>
</dbReference>
<dbReference type="InterPro" id="IPR033922">
    <property type="entry name" value="NAD_bind_Glu_DH"/>
</dbReference>
<dbReference type="NCBIfam" id="NF006929">
    <property type="entry name" value="PRK09414.1"/>
    <property type="match status" value="1"/>
</dbReference>
<dbReference type="NCBIfam" id="NF010633">
    <property type="entry name" value="PRK14030.1"/>
    <property type="match status" value="1"/>
</dbReference>
<dbReference type="PANTHER" id="PTHR43571">
    <property type="entry name" value="NADP-SPECIFIC GLUTAMATE DEHYDROGENASE 1-RELATED"/>
    <property type="match status" value="1"/>
</dbReference>
<dbReference type="PANTHER" id="PTHR43571:SF1">
    <property type="entry name" value="NADP-SPECIFIC GLUTAMATE DEHYDROGENASE 1-RELATED"/>
    <property type="match status" value="1"/>
</dbReference>
<dbReference type="Pfam" id="PF00208">
    <property type="entry name" value="ELFV_dehydrog"/>
    <property type="match status" value="1"/>
</dbReference>
<dbReference type="Pfam" id="PF02812">
    <property type="entry name" value="ELFV_dehydrog_N"/>
    <property type="match status" value="1"/>
</dbReference>
<dbReference type="PIRSF" id="PIRSF000185">
    <property type="entry name" value="Glu_DH"/>
    <property type="match status" value="1"/>
</dbReference>
<dbReference type="PRINTS" id="PR00082">
    <property type="entry name" value="GLFDHDRGNASE"/>
</dbReference>
<dbReference type="SMART" id="SM00839">
    <property type="entry name" value="ELFV_dehydrog"/>
    <property type="match status" value="1"/>
</dbReference>
<dbReference type="SUPFAM" id="SSF53223">
    <property type="entry name" value="Aminoacid dehydrogenase-like, N-terminal domain"/>
    <property type="match status" value="1"/>
</dbReference>
<dbReference type="SUPFAM" id="SSF51735">
    <property type="entry name" value="NAD(P)-binding Rossmann-fold domains"/>
    <property type="match status" value="1"/>
</dbReference>
<dbReference type="PROSITE" id="PS00074">
    <property type="entry name" value="GLFV_DEHYDROGENASE"/>
    <property type="match status" value="1"/>
</dbReference>
<name>DHE2_PORGI</name>